<organism>
    <name type="scientific">Homo sapiens</name>
    <name type="common">Human</name>
    <dbReference type="NCBI Taxonomy" id="9606"/>
    <lineage>
        <taxon>Eukaryota</taxon>
        <taxon>Metazoa</taxon>
        <taxon>Chordata</taxon>
        <taxon>Craniata</taxon>
        <taxon>Vertebrata</taxon>
        <taxon>Euteleostomi</taxon>
        <taxon>Mammalia</taxon>
        <taxon>Eutheria</taxon>
        <taxon>Euarchontoglires</taxon>
        <taxon>Primates</taxon>
        <taxon>Haplorrhini</taxon>
        <taxon>Catarrhini</taxon>
        <taxon>Hominidae</taxon>
        <taxon>Homo</taxon>
    </lineage>
</organism>
<sequence length="150" mass="16680">MKELLRLKHCKHLLTTHVHSPWTPSLTLTPSLLTLDTLTHPRHRHSSPWTPHSAPWTPSLTLDTFTHPDTLTHPGHPHSPWIPSLLTLDTLTHPGYPHSSPWTLSLTLTPSILTLDSLTPHPGLPHSSPWTPSLLILDTLTQPGHPHSSP</sequence>
<name>PLAC4_HUMAN</name>
<reference key="1">
    <citation type="journal article" date="2004" name="Proc. Natl. Acad. Sci. U.S.A.">
        <title>Large-scale cDNA transfection screening for genes related to cancer development and progression.</title>
        <authorList>
            <person name="Wan D."/>
            <person name="Gong Y."/>
            <person name="Qin W."/>
            <person name="Zhang P."/>
            <person name="Li J."/>
            <person name="Wei L."/>
            <person name="Zhou X."/>
            <person name="Li H."/>
            <person name="Qiu X."/>
            <person name="Zhong F."/>
            <person name="He L."/>
            <person name="Yu J."/>
            <person name="Yao G."/>
            <person name="Jiang H."/>
            <person name="Qian L."/>
            <person name="Yu Y."/>
            <person name="Shu H."/>
            <person name="Chen X."/>
            <person name="Xu H."/>
            <person name="Guo M."/>
            <person name="Pan Z."/>
            <person name="Chen Y."/>
            <person name="Ge C."/>
            <person name="Yang S."/>
            <person name="Gu J."/>
        </authorList>
    </citation>
    <scope>NUCLEOTIDE SEQUENCE [LARGE SCALE MRNA]</scope>
</reference>
<reference key="2">
    <citation type="journal article" date="2000" name="Nature">
        <title>The DNA sequence of human chromosome 21.</title>
        <authorList>
            <person name="Hattori M."/>
            <person name="Fujiyama A."/>
            <person name="Taylor T.D."/>
            <person name="Watanabe H."/>
            <person name="Yada T."/>
            <person name="Park H.-S."/>
            <person name="Toyoda A."/>
            <person name="Ishii K."/>
            <person name="Totoki Y."/>
            <person name="Choi D.-K."/>
            <person name="Groner Y."/>
            <person name="Soeda E."/>
            <person name="Ohki M."/>
            <person name="Takagi T."/>
            <person name="Sakaki Y."/>
            <person name="Taudien S."/>
            <person name="Blechschmidt K."/>
            <person name="Polley A."/>
            <person name="Menzel U."/>
            <person name="Delabar J."/>
            <person name="Kumpf K."/>
            <person name="Lehmann R."/>
            <person name="Patterson D."/>
            <person name="Reichwald K."/>
            <person name="Rump A."/>
            <person name="Schillhabel M."/>
            <person name="Schudy A."/>
            <person name="Zimmermann W."/>
            <person name="Rosenthal A."/>
            <person name="Kudoh J."/>
            <person name="Shibuya K."/>
            <person name="Kawasaki K."/>
            <person name="Asakawa S."/>
            <person name="Shintani A."/>
            <person name="Sasaki T."/>
            <person name="Nagamine K."/>
            <person name="Mitsuyama S."/>
            <person name="Antonarakis S.E."/>
            <person name="Minoshima S."/>
            <person name="Shimizu N."/>
            <person name="Nordsiek G."/>
            <person name="Hornischer K."/>
            <person name="Brandt P."/>
            <person name="Scharfe M."/>
            <person name="Schoen O."/>
            <person name="Desario A."/>
            <person name="Reichelt J."/>
            <person name="Kauer G."/>
            <person name="Bloecker H."/>
            <person name="Ramser J."/>
            <person name="Beck A."/>
            <person name="Klages S."/>
            <person name="Hennig S."/>
            <person name="Riesselmann L."/>
            <person name="Dagand E."/>
            <person name="Wehrmeyer S."/>
            <person name="Borzym K."/>
            <person name="Gardiner K."/>
            <person name="Nizetic D."/>
            <person name="Francis F."/>
            <person name="Lehrach H."/>
            <person name="Reinhardt R."/>
            <person name="Yaspo M.-L."/>
        </authorList>
    </citation>
    <scope>NUCLEOTIDE SEQUENCE [LARGE SCALE GENOMIC DNA]</scope>
</reference>
<reference key="3">
    <citation type="journal article" date="1993" name="Genomics">
        <title>D21S418E identifies a cAMP-regulated gene located on chromosome 21q22.3 that is expressed in placental syncytiotrophoblast and choriocarcinoma cells.</title>
        <authorList>
            <person name="Kido S."/>
            <person name="Sakuragi N."/>
            <person name="Bronner M.P."/>
            <person name="Sayegh R."/>
            <person name="Berger R."/>
            <person name="Patterson D."/>
            <person name="Strauss J.F. III"/>
        </authorList>
    </citation>
    <scope>TISSUE SPECIFICITY</scope>
</reference>
<comment type="tissue specificity">
    <text evidence="1">Expressed in placental syncytiotrophoblast and choriocarcinoma cells.</text>
</comment>
<proteinExistence type="evidence at transcript level"/>
<gene>
    <name type="primary">PLAC4</name>
    <name type="synonym">C21orf115</name>
    <name type="synonym">D21S418E</name>
    <name type="ORF">PP1416</name>
</gene>
<dbReference type="EMBL" id="AF269287">
    <property type="protein sequence ID" value="AAG23170.1"/>
    <property type="molecule type" value="mRNA"/>
</dbReference>
<dbReference type="RefSeq" id="NP_878252.2">
    <property type="nucleotide sequence ID" value="NM_182832.2"/>
</dbReference>
<dbReference type="BioGRID" id="128150">
    <property type="interactions" value="1"/>
</dbReference>
<dbReference type="GlyGen" id="Q8WY50">
    <property type="glycosylation" value="1 site"/>
</dbReference>
<dbReference type="BioMuta" id="PLAC4"/>
<dbReference type="AGR" id="HGNC:14616"/>
<dbReference type="GeneCards" id="PLAC4"/>
<dbReference type="HGNC" id="HGNC:14616">
    <property type="gene designation" value="PLAC4"/>
</dbReference>
<dbReference type="MIM" id="613770">
    <property type="type" value="gene"/>
</dbReference>
<dbReference type="neXtProt" id="NX_Q8WY50"/>
<dbReference type="PharmGKB" id="PA33374"/>
<dbReference type="InParanoid" id="Q8WY50"/>
<dbReference type="PAN-GO" id="Q8WY50">
    <property type="GO annotations" value="0 GO annotations based on evolutionary models"/>
</dbReference>
<dbReference type="PathwayCommons" id="Q8WY50"/>
<dbReference type="BioGRID-ORCS" id="191585">
    <property type="hits" value="6 hits in 207 CRISPR screens"/>
</dbReference>
<dbReference type="ChiTaRS" id="PLAC4">
    <property type="organism name" value="human"/>
</dbReference>
<dbReference type="GenomeRNAi" id="191585"/>
<dbReference type="Pharos" id="Q8WY50">
    <property type="development level" value="Tdark"/>
</dbReference>
<dbReference type="PRO" id="PR:Q8WY50"/>
<dbReference type="Proteomes" id="UP000005640">
    <property type="component" value="Unplaced"/>
</dbReference>
<dbReference type="RNAct" id="Q8WY50">
    <property type="molecule type" value="protein"/>
</dbReference>
<evidence type="ECO:0000269" key="1">
    <source>
    </source>
</evidence>
<evidence type="ECO:0000305" key="2"/>
<protein>
    <recommendedName>
        <fullName>Placenta-specific protein 4</fullName>
    </recommendedName>
</protein>
<keyword id="KW-1185">Reference proteome</keyword>
<feature type="chain" id="PRO_0000299058" description="Placenta-specific protein 4">
    <location>
        <begin position="1"/>
        <end position="150"/>
    </location>
</feature>
<feature type="sequence conflict" description="In Ref. 1; AAG23170." evidence="2" ref="1">
    <original>P</original>
    <variation>H</variation>
    <location>
        <position position="41"/>
    </location>
</feature>
<accession>Q8WY50</accession>